<comment type="function">
    <text evidence="1">One of the primary rRNA binding proteins, it binds directly to 16S rRNA where it nucleates assembly of the body of the 30S subunit.</text>
</comment>
<comment type="function">
    <text evidence="1">With S5 and S12 plays an important role in translational accuracy.</text>
</comment>
<comment type="subunit">
    <text evidence="1">Part of the 30S ribosomal subunit. Contacts protein S5. The interaction surface between S4 and S5 is involved in control of translational fidelity.</text>
</comment>
<comment type="similarity">
    <text evidence="1">Belongs to the universal ribosomal protein uS4 family.</text>
</comment>
<name>RS4_THESQ</name>
<reference key="1">
    <citation type="journal article" date="2011" name="J. Bacteriol.">
        <title>Genome sequence of Thermotoga sp. strain RQ2, a hyperthermophilic bacterium isolated from a geothermally heated region of the seafloor near Ribeira Quente, the Azores.</title>
        <authorList>
            <person name="Swithers K.S."/>
            <person name="DiPippo J.L."/>
            <person name="Bruce D.C."/>
            <person name="Detter C."/>
            <person name="Tapia R."/>
            <person name="Han S."/>
            <person name="Saunders E."/>
            <person name="Goodwin L.A."/>
            <person name="Han J."/>
            <person name="Woyke T."/>
            <person name="Pitluck S."/>
            <person name="Pennacchio L."/>
            <person name="Nolan M."/>
            <person name="Mikhailova N."/>
            <person name="Lykidis A."/>
            <person name="Land M.L."/>
            <person name="Brettin T."/>
            <person name="Stetter K.O."/>
            <person name="Nelson K.E."/>
            <person name="Gogarten J.P."/>
            <person name="Noll K.M."/>
        </authorList>
    </citation>
    <scope>NUCLEOTIDE SEQUENCE [LARGE SCALE GENOMIC DNA]</scope>
    <source>
        <strain>RQ2</strain>
    </source>
</reference>
<gene>
    <name evidence="1" type="primary">rpsD</name>
    <name type="ordered locus">TRQ2_1367</name>
</gene>
<evidence type="ECO:0000255" key="1">
    <source>
        <dbReference type="HAMAP-Rule" id="MF_01306"/>
    </source>
</evidence>
<evidence type="ECO:0000305" key="2"/>
<feature type="chain" id="PRO_1000140810" description="Small ribosomal subunit protein uS4">
    <location>
        <begin position="1"/>
        <end position="209"/>
    </location>
</feature>
<feature type="domain" description="S4 RNA-binding" evidence="1">
    <location>
        <begin position="98"/>
        <end position="161"/>
    </location>
</feature>
<sequence>MARYTGPLCKLCRREGMKLYLKGERCYTDKCAFDRRPYAPGQHGQRRAKLTQYGIQLRAKQTVKRIYGILERQFERYVEKAMQKAGDTRENLIQILEARLDNVVYRMGFAINRRQARQLVNHGHFLVNGKKVNIPSYLLKPNDVVELREKSRDLEVIKKAVEANKERSVVPWIEVDYDNYRGTFLRYPSLEEVTDLPVDLQTVIEFYSR</sequence>
<dbReference type="EMBL" id="CP000969">
    <property type="protein sequence ID" value="ACB09711.1"/>
    <property type="molecule type" value="Genomic_DNA"/>
</dbReference>
<dbReference type="RefSeq" id="WP_011943801.1">
    <property type="nucleotide sequence ID" value="NC_010483.1"/>
</dbReference>
<dbReference type="SMR" id="B1LBL3"/>
<dbReference type="KEGG" id="trq:TRQ2_1367"/>
<dbReference type="HOGENOM" id="CLU_092403_0_2_0"/>
<dbReference type="Proteomes" id="UP000001687">
    <property type="component" value="Chromosome"/>
</dbReference>
<dbReference type="GO" id="GO:0015935">
    <property type="term" value="C:small ribosomal subunit"/>
    <property type="evidence" value="ECO:0007669"/>
    <property type="project" value="InterPro"/>
</dbReference>
<dbReference type="GO" id="GO:0019843">
    <property type="term" value="F:rRNA binding"/>
    <property type="evidence" value="ECO:0007669"/>
    <property type="project" value="UniProtKB-UniRule"/>
</dbReference>
<dbReference type="GO" id="GO:0003735">
    <property type="term" value="F:structural constituent of ribosome"/>
    <property type="evidence" value="ECO:0007669"/>
    <property type="project" value="InterPro"/>
</dbReference>
<dbReference type="GO" id="GO:0042274">
    <property type="term" value="P:ribosomal small subunit biogenesis"/>
    <property type="evidence" value="ECO:0007669"/>
    <property type="project" value="TreeGrafter"/>
</dbReference>
<dbReference type="GO" id="GO:0006412">
    <property type="term" value="P:translation"/>
    <property type="evidence" value="ECO:0007669"/>
    <property type="project" value="UniProtKB-UniRule"/>
</dbReference>
<dbReference type="CDD" id="cd00165">
    <property type="entry name" value="S4"/>
    <property type="match status" value="1"/>
</dbReference>
<dbReference type="FunFam" id="1.10.1050.10:FF:000001">
    <property type="entry name" value="30S ribosomal protein S4"/>
    <property type="match status" value="1"/>
</dbReference>
<dbReference type="FunFam" id="3.10.290.10:FF:000001">
    <property type="entry name" value="30S ribosomal protein S4"/>
    <property type="match status" value="1"/>
</dbReference>
<dbReference type="Gene3D" id="1.10.1050.10">
    <property type="entry name" value="Ribosomal Protein S4 Delta 41, Chain A, domain 1"/>
    <property type="match status" value="1"/>
</dbReference>
<dbReference type="Gene3D" id="3.10.290.10">
    <property type="entry name" value="RNA-binding S4 domain"/>
    <property type="match status" value="1"/>
</dbReference>
<dbReference type="HAMAP" id="MF_01306_B">
    <property type="entry name" value="Ribosomal_uS4_B"/>
    <property type="match status" value="1"/>
</dbReference>
<dbReference type="InterPro" id="IPR022801">
    <property type="entry name" value="Ribosomal_uS4"/>
</dbReference>
<dbReference type="InterPro" id="IPR005709">
    <property type="entry name" value="Ribosomal_uS4_bac-type"/>
</dbReference>
<dbReference type="InterPro" id="IPR001912">
    <property type="entry name" value="Ribosomal_uS4_N"/>
</dbReference>
<dbReference type="InterPro" id="IPR002942">
    <property type="entry name" value="S4_RNA-bd"/>
</dbReference>
<dbReference type="InterPro" id="IPR036986">
    <property type="entry name" value="S4_RNA-bd_sf"/>
</dbReference>
<dbReference type="NCBIfam" id="NF003717">
    <property type="entry name" value="PRK05327.1"/>
    <property type="match status" value="1"/>
</dbReference>
<dbReference type="NCBIfam" id="TIGR01017">
    <property type="entry name" value="rpsD_bact"/>
    <property type="match status" value="1"/>
</dbReference>
<dbReference type="PANTHER" id="PTHR11831">
    <property type="entry name" value="30S 40S RIBOSOMAL PROTEIN"/>
    <property type="match status" value="1"/>
</dbReference>
<dbReference type="PANTHER" id="PTHR11831:SF4">
    <property type="entry name" value="SMALL RIBOSOMAL SUBUNIT PROTEIN US4M"/>
    <property type="match status" value="1"/>
</dbReference>
<dbReference type="Pfam" id="PF00163">
    <property type="entry name" value="Ribosomal_S4"/>
    <property type="match status" value="1"/>
</dbReference>
<dbReference type="Pfam" id="PF01479">
    <property type="entry name" value="S4"/>
    <property type="match status" value="1"/>
</dbReference>
<dbReference type="SMART" id="SM01390">
    <property type="entry name" value="Ribosomal_S4"/>
    <property type="match status" value="1"/>
</dbReference>
<dbReference type="SMART" id="SM00363">
    <property type="entry name" value="S4"/>
    <property type="match status" value="1"/>
</dbReference>
<dbReference type="SUPFAM" id="SSF55174">
    <property type="entry name" value="Alpha-L RNA-binding motif"/>
    <property type="match status" value="1"/>
</dbReference>
<dbReference type="PROSITE" id="PS50889">
    <property type="entry name" value="S4"/>
    <property type="match status" value="1"/>
</dbReference>
<organism>
    <name type="scientific">Thermotoga sp. (strain RQ2)</name>
    <dbReference type="NCBI Taxonomy" id="126740"/>
    <lineage>
        <taxon>Bacteria</taxon>
        <taxon>Thermotogati</taxon>
        <taxon>Thermotogota</taxon>
        <taxon>Thermotogae</taxon>
        <taxon>Thermotogales</taxon>
        <taxon>Thermotogaceae</taxon>
        <taxon>Thermotoga</taxon>
    </lineage>
</organism>
<proteinExistence type="inferred from homology"/>
<keyword id="KW-0687">Ribonucleoprotein</keyword>
<keyword id="KW-0689">Ribosomal protein</keyword>
<keyword id="KW-0694">RNA-binding</keyword>
<keyword id="KW-0699">rRNA-binding</keyword>
<accession>B1LBL3</accession>
<protein>
    <recommendedName>
        <fullName evidence="1">Small ribosomal subunit protein uS4</fullName>
    </recommendedName>
    <alternativeName>
        <fullName evidence="2">30S ribosomal protein S4</fullName>
    </alternativeName>
</protein>